<dbReference type="EMBL" id="AC022415">
    <property type="status" value="NOT_ANNOTATED_CDS"/>
    <property type="molecule type" value="Genomic_DNA"/>
</dbReference>
<dbReference type="EMBL" id="CH471106">
    <property type="protein sequence ID" value="EAW84261.1"/>
    <property type="molecule type" value="Genomic_DNA"/>
</dbReference>
<dbReference type="EMBL" id="CH471106">
    <property type="protein sequence ID" value="EAW84263.1"/>
    <property type="molecule type" value="Genomic_DNA"/>
</dbReference>
<dbReference type="EMBL" id="BC007868">
    <property type="protein sequence ID" value="AAH07868.1"/>
    <property type="molecule type" value="mRNA"/>
</dbReference>
<dbReference type="EMBL" id="BC101589">
    <property type="protein sequence ID" value="AAI01590.1"/>
    <property type="molecule type" value="mRNA"/>
</dbReference>
<dbReference type="EMBL" id="BC101591">
    <property type="protein sequence ID" value="AAI01592.1"/>
    <property type="molecule type" value="mRNA"/>
</dbReference>
<dbReference type="EMBL" id="BC143563">
    <property type="protein sequence ID" value="AAI43564.1"/>
    <property type="molecule type" value="mRNA"/>
</dbReference>
<dbReference type="EMBL" id="DN991057">
    <property type="status" value="NOT_ANNOTATED_CDS"/>
    <property type="molecule type" value="mRNA"/>
</dbReference>
<dbReference type="CCDS" id="CCDS12269.2">
    <molecule id="Q96I27-2"/>
</dbReference>
<dbReference type="RefSeq" id="NP_660276.2">
    <molecule id="Q96I27-2"/>
    <property type="nucleotide sequence ID" value="NM_145233.4"/>
</dbReference>
<dbReference type="SMR" id="Q96I27"/>
<dbReference type="BioGRID" id="124739">
    <property type="interactions" value="16"/>
</dbReference>
<dbReference type="FunCoup" id="Q96I27">
    <property type="interactions" value="620"/>
</dbReference>
<dbReference type="IntAct" id="Q96I27">
    <property type="interactions" value="13"/>
</dbReference>
<dbReference type="STRING" id="9606.ENSP00000394380"/>
<dbReference type="iPTMnet" id="Q96I27"/>
<dbReference type="PhosphoSitePlus" id="Q96I27"/>
<dbReference type="BioMuta" id="ZNF625"/>
<dbReference type="DMDM" id="74762662"/>
<dbReference type="jPOST" id="Q96I27"/>
<dbReference type="MassIVE" id="Q96I27"/>
<dbReference type="PaxDb" id="9606-ENSP00000394380"/>
<dbReference type="PeptideAtlas" id="Q96I27"/>
<dbReference type="ProteomicsDB" id="46343"/>
<dbReference type="ProteomicsDB" id="76808">
    <molecule id="Q96I27-1"/>
</dbReference>
<dbReference type="Antibodypedia" id="56965">
    <property type="antibodies" value="115 antibodies from 15 providers"/>
</dbReference>
<dbReference type="DNASU" id="90589"/>
<dbReference type="Ensembl" id="ENST00000439556.3">
    <molecule id="Q96I27-2"/>
    <property type="protein sequence ID" value="ENSP00000394380.2"/>
    <property type="gene ID" value="ENSG00000257591.6"/>
</dbReference>
<dbReference type="GeneID" id="90589"/>
<dbReference type="KEGG" id="hsa:90589"/>
<dbReference type="MANE-Select" id="ENST00000439556.3">
    <molecule id="Q96I27-2"/>
    <property type="protein sequence ID" value="ENSP00000394380.2"/>
    <property type="RefSeq nucleotide sequence ID" value="NM_145233.4"/>
    <property type="RefSeq protein sequence ID" value="NP_660276.2"/>
</dbReference>
<dbReference type="UCSC" id="uc010dyo.3">
    <molecule id="Q96I27-1"/>
    <property type="organism name" value="human"/>
</dbReference>
<dbReference type="AGR" id="HGNC:30571"/>
<dbReference type="CTD" id="90589"/>
<dbReference type="GeneCards" id="ZNF625"/>
<dbReference type="HGNC" id="HGNC:30571">
    <property type="gene designation" value="ZNF625"/>
</dbReference>
<dbReference type="HPA" id="ENSG00000257591">
    <property type="expression patterns" value="Tissue enhanced (retina)"/>
</dbReference>
<dbReference type="neXtProt" id="NX_Q96I27"/>
<dbReference type="OpenTargets" id="ENSG00000257591"/>
<dbReference type="PharmGKB" id="PA134911932"/>
<dbReference type="VEuPathDB" id="HostDB:ENSG00000257591"/>
<dbReference type="eggNOG" id="KOG1721">
    <property type="taxonomic scope" value="Eukaryota"/>
</dbReference>
<dbReference type="GeneTree" id="ENSGT00940000164670"/>
<dbReference type="HOGENOM" id="CLU_002678_44_3_1"/>
<dbReference type="InParanoid" id="Q96I27"/>
<dbReference type="OMA" id="NECADCM"/>
<dbReference type="OrthoDB" id="6077919at2759"/>
<dbReference type="PAN-GO" id="Q96I27">
    <property type="GO annotations" value="4 GO annotations based on evolutionary models"/>
</dbReference>
<dbReference type="PhylomeDB" id="Q96I27"/>
<dbReference type="TreeFam" id="TF338854"/>
<dbReference type="PathwayCommons" id="Q96I27"/>
<dbReference type="Reactome" id="R-HSA-212436">
    <property type="pathway name" value="Generic Transcription Pathway"/>
</dbReference>
<dbReference type="SignaLink" id="Q96I27"/>
<dbReference type="BioGRID-ORCS" id="90589">
    <property type="hits" value="14 hits in 1165 CRISPR screens"/>
</dbReference>
<dbReference type="GenomeRNAi" id="90589"/>
<dbReference type="Pharos" id="Q96I27">
    <property type="development level" value="Tdark"/>
</dbReference>
<dbReference type="PRO" id="PR:Q96I27"/>
<dbReference type="Proteomes" id="UP000005640">
    <property type="component" value="Chromosome 19"/>
</dbReference>
<dbReference type="RNAct" id="Q96I27">
    <property type="molecule type" value="protein"/>
</dbReference>
<dbReference type="Bgee" id="ENSG00000257591">
    <property type="expression patterns" value="Expressed in ventricular zone and 94 other cell types or tissues"/>
</dbReference>
<dbReference type="ExpressionAtlas" id="Q96I27">
    <property type="expression patterns" value="baseline and differential"/>
</dbReference>
<dbReference type="GO" id="GO:0005634">
    <property type="term" value="C:nucleus"/>
    <property type="evidence" value="ECO:0000318"/>
    <property type="project" value="GO_Central"/>
</dbReference>
<dbReference type="GO" id="GO:0000981">
    <property type="term" value="F:DNA-binding transcription factor activity, RNA polymerase II-specific"/>
    <property type="evidence" value="ECO:0000318"/>
    <property type="project" value="GO_Central"/>
</dbReference>
<dbReference type="GO" id="GO:0000977">
    <property type="term" value="F:RNA polymerase II transcription regulatory region sequence-specific DNA binding"/>
    <property type="evidence" value="ECO:0000318"/>
    <property type="project" value="GO_Central"/>
</dbReference>
<dbReference type="GO" id="GO:0008270">
    <property type="term" value="F:zinc ion binding"/>
    <property type="evidence" value="ECO:0007669"/>
    <property type="project" value="UniProtKB-KW"/>
</dbReference>
<dbReference type="GO" id="GO:0006357">
    <property type="term" value="P:regulation of transcription by RNA polymerase II"/>
    <property type="evidence" value="ECO:0000318"/>
    <property type="project" value="GO_Central"/>
</dbReference>
<dbReference type="FunFam" id="3.30.160.60:FF:004421">
    <property type="match status" value="1"/>
</dbReference>
<dbReference type="FunFam" id="3.30.160.60:FF:002254">
    <property type="entry name" value="Zinc finger protein 540"/>
    <property type="match status" value="3"/>
</dbReference>
<dbReference type="FunFam" id="3.30.160.60:FF:000371">
    <property type="entry name" value="Zinc finger protein 555"/>
    <property type="match status" value="1"/>
</dbReference>
<dbReference type="FunFam" id="3.30.160.60:FF:002244">
    <property type="entry name" value="Zinc finger protein 625"/>
    <property type="match status" value="1"/>
</dbReference>
<dbReference type="FunFam" id="3.30.160.60:FF:002957">
    <property type="entry name" value="Zinc finger protein 625"/>
    <property type="match status" value="1"/>
</dbReference>
<dbReference type="FunFam" id="3.30.160.60:FF:002288">
    <property type="entry name" value="Zinc finger protein 700"/>
    <property type="match status" value="1"/>
</dbReference>
<dbReference type="Gene3D" id="3.30.160.60">
    <property type="entry name" value="Classic Zinc Finger"/>
    <property type="match status" value="8"/>
</dbReference>
<dbReference type="InterPro" id="IPR036236">
    <property type="entry name" value="Znf_C2H2_sf"/>
</dbReference>
<dbReference type="InterPro" id="IPR013087">
    <property type="entry name" value="Znf_C2H2_type"/>
</dbReference>
<dbReference type="PANTHER" id="PTHR24381">
    <property type="entry name" value="ZINC FINGER PROTEIN"/>
    <property type="match status" value="1"/>
</dbReference>
<dbReference type="PANTHER" id="PTHR24381:SF427">
    <property type="entry name" value="ZINC FINGER PROTEIN 491"/>
    <property type="match status" value="1"/>
</dbReference>
<dbReference type="Pfam" id="PF00096">
    <property type="entry name" value="zf-C2H2"/>
    <property type="match status" value="5"/>
</dbReference>
<dbReference type="Pfam" id="PF13912">
    <property type="entry name" value="zf-C2H2_6"/>
    <property type="match status" value="1"/>
</dbReference>
<dbReference type="SMART" id="SM00355">
    <property type="entry name" value="ZnF_C2H2"/>
    <property type="match status" value="8"/>
</dbReference>
<dbReference type="SUPFAM" id="SSF57667">
    <property type="entry name" value="beta-beta-alpha zinc fingers"/>
    <property type="match status" value="4"/>
</dbReference>
<dbReference type="PROSITE" id="PS00028">
    <property type="entry name" value="ZINC_FINGER_C2H2_1"/>
    <property type="match status" value="8"/>
</dbReference>
<dbReference type="PROSITE" id="PS50157">
    <property type="entry name" value="ZINC_FINGER_C2H2_2"/>
    <property type="match status" value="8"/>
</dbReference>
<evidence type="ECO:0000250" key="1">
    <source>
        <dbReference type="UniProtKB" id="Q9BS34"/>
    </source>
</evidence>
<evidence type="ECO:0000255" key="2">
    <source>
        <dbReference type="PROSITE-ProRule" id="PRU00042"/>
    </source>
</evidence>
<evidence type="ECO:0000256" key="3">
    <source>
        <dbReference type="SAM" id="MobiDB-lite"/>
    </source>
</evidence>
<evidence type="ECO:0000303" key="4">
    <source ref="4"/>
</evidence>
<evidence type="ECO:0000305" key="5"/>
<name>ZN625_HUMAN</name>
<accession>Q96I27</accession>
<accession>A4FU45</accession>
<accession>I3L0E9</accession>
<sequence length="306" mass="34746">MGERLLESKKDHQHGEILTQVPDDMLKKKTPRVKSCGEVSVGHASLNRHHRADTGHKPYEYQEYGQKPYKCTYCKKAFSDLPYFRTHEWAHTGGKPYDCEECGKSFISRSSIRRHRIMHSGDGPYKCNFCGKALMCLSLYLIHKRTHTGEKPYECKQCGKAFSHSGSLRIHERTHTGEKPYECSECGKAFHSSTCLHAHKITHTGEKPYECKQCGKAFVSFNSVRYHERTHTGEKPYECKQCGKAFRSASHLRTHGRTHTGEKPYECKQCGKAFGCASSVKIHERTHTGEKPCSSNTSKGQGEKIA</sequence>
<keyword id="KW-0025">Alternative splicing</keyword>
<keyword id="KW-0238">DNA-binding</keyword>
<keyword id="KW-0479">Metal-binding</keyword>
<keyword id="KW-0539">Nucleus</keyword>
<keyword id="KW-0597">Phosphoprotein</keyword>
<keyword id="KW-1267">Proteomics identification</keyword>
<keyword id="KW-1185">Reference proteome</keyword>
<keyword id="KW-0677">Repeat</keyword>
<keyword id="KW-0804">Transcription</keyword>
<keyword id="KW-0805">Transcription regulation</keyword>
<keyword id="KW-0862">Zinc</keyword>
<keyword id="KW-0863">Zinc-finger</keyword>
<comment type="function">
    <text>May be involved in transcriptional regulation.</text>
</comment>
<comment type="interaction">
    <interactant intactId="EBI-4395587">
        <id>Q96I27</id>
    </interactant>
    <interactant intactId="EBI-10171697">
        <id>Q6A162</id>
        <label>KRT40</label>
    </interactant>
    <organismsDiffer>false</organismsDiffer>
    <experiments>3</experiments>
</comment>
<comment type="interaction">
    <interactant intactId="EBI-4395587">
        <id>Q96I27</id>
    </interactant>
    <interactant intactId="EBI-10178153">
        <id>P60372</id>
        <label>KRTAP10-4</label>
    </interactant>
    <organismsDiffer>false</organismsDiffer>
    <experiments>3</experiments>
</comment>
<comment type="interaction">
    <interactant intactId="EBI-4395587">
        <id>Q96I27</id>
    </interactant>
    <interactant intactId="EBI-10172290">
        <id>P60409</id>
        <label>KRTAP10-7</label>
    </interactant>
    <organismsDiffer>false</organismsDiffer>
    <experiments>3</experiments>
</comment>
<comment type="interaction">
    <interactant intactId="EBI-4395587">
        <id>Q96I27</id>
    </interactant>
    <interactant intactId="EBI-10172052">
        <id>P60411</id>
        <label>KRTAP10-9</label>
    </interactant>
    <organismsDiffer>false</organismsDiffer>
    <experiments>3</experiments>
</comment>
<comment type="interaction">
    <interactant intactId="EBI-12038525">
        <id>Q96I27-2</id>
    </interactant>
    <interactant intactId="EBI-747754">
        <id>P28799</id>
        <label>GRN</label>
    </interactant>
    <organismsDiffer>false</organismsDiffer>
    <experiments>3</experiments>
</comment>
<comment type="interaction">
    <interactant intactId="EBI-12038525">
        <id>Q96I27-2</id>
    </interactant>
    <interactant intactId="EBI-10171774">
        <id>P60410</id>
        <label>KRTAP10-8</label>
    </interactant>
    <organismsDiffer>false</organismsDiffer>
    <experiments>3</experiments>
</comment>
<comment type="interaction">
    <interactant intactId="EBI-12038525">
        <id>Q96I27-2</id>
    </interactant>
    <interactant intactId="EBI-5235340">
        <id>Q7Z699</id>
        <label>SPRED1</label>
    </interactant>
    <organismsDiffer>false</organismsDiffer>
    <experiments>3</experiments>
</comment>
<comment type="interaction">
    <interactant intactId="EBI-12038525">
        <id>Q96I27-2</id>
    </interactant>
    <interactant intactId="EBI-720609">
        <id>O76024</id>
        <label>WFS1</label>
    </interactant>
    <organismsDiffer>false</organismsDiffer>
    <experiments>3</experiments>
</comment>
<comment type="subcellular location">
    <subcellularLocation>
        <location evidence="5">Nucleus</location>
    </subcellularLocation>
</comment>
<comment type="alternative products">
    <event type="alternative splicing"/>
    <isoform>
        <id>Q96I27-1</id>
        <name>1</name>
        <sequence type="displayed"/>
    </isoform>
    <isoform>
        <id>Q96I27-2</id>
        <name>2</name>
        <sequence type="described" ref="VSP_046327"/>
    </isoform>
</comment>
<comment type="similarity">
    <text evidence="5">Belongs to the krueppel C2H2-type zinc-finger protein family.</text>
</comment>
<reference key="1">
    <citation type="journal article" date="2004" name="Nature">
        <title>The DNA sequence and biology of human chromosome 19.</title>
        <authorList>
            <person name="Grimwood J."/>
            <person name="Gordon L.A."/>
            <person name="Olsen A.S."/>
            <person name="Terry A."/>
            <person name="Schmutz J."/>
            <person name="Lamerdin J.E."/>
            <person name="Hellsten U."/>
            <person name="Goodstein D."/>
            <person name="Couronne O."/>
            <person name="Tran-Gyamfi M."/>
            <person name="Aerts A."/>
            <person name="Altherr M."/>
            <person name="Ashworth L."/>
            <person name="Bajorek E."/>
            <person name="Black S."/>
            <person name="Branscomb E."/>
            <person name="Caenepeel S."/>
            <person name="Carrano A.V."/>
            <person name="Caoile C."/>
            <person name="Chan Y.M."/>
            <person name="Christensen M."/>
            <person name="Cleland C.A."/>
            <person name="Copeland A."/>
            <person name="Dalin E."/>
            <person name="Dehal P."/>
            <person name="Denys M."/>
            <person name="Detter J.C."/>
            <person name="Escobar J."/>
            <person name="Flowers D."/>
            <person name="Fotopulos D."/>
            <person name="Garcia C."/>
            <person name="Georgescu A.M."/>
            <person name="Glavina T."/>
            <person name="Gomez M."/>
            <person name="Gonzales E."/>
            <person name="Groza M."/>
            <person name="Hammon N."/>
            <person name="Hawkins T."/>
            <person name="Haydu L."/>
            <person name="Ho I."/>
            <person name="Huang W."/>
            <person name="Israni S."/>
            <person name="Jett J."/>
            <person name="Kadner K."/>
            <person name="Kimball H."/>
            <person name="Kobayashi A."/>
            <person name="Larionov V."/>
            <person name="Leem S.-H."/>
            <person name="Lopez F."/>
            <person name="Lou Y."/>
            <person name="Lowry S."/>
            <person name="Malfatti S."/>
            <person name="Martinez D."/>
            <person name="McCready P.M."/>
            <person name="Medina C."/>
            <person name="Morgan J."/>
            <person name="Nelson K."/>
            <person name="Nolan M."/>
            <person name="Ovcharenko I."/>
            <person name="Pitluck S."/>
            <person name="Pollard M."/>
            <person name="Popkie A.P."/>
            <person name="Predki P."/>
            <person name="Quan G."/>
            <person name="Ramirez L."/>
            <person name="Rash S."/>
            <person name="Retterer J."/>
            <person name="Rodriguez A."/>
            <person name="Rogers S."/>
            <person name="Salamov A."/>
            <person name="Salazar A."/>
            <person name="She X."/>
            <person name="Smith D."/>
            <person name="Slezak T."/>
            <person name="Solovyev V."/>
            <person name="Thayer N."/>
            <person name="Tice H."/>
            <person name="Tsai M."/>
            <person name="Ustaszewska A."/>
            <person name="Vo N."/>
            <person name="Wagner M."/>
            <person name="Wheeler J."/>
            <person name="Wu K."/>
            <person name="Xie G."/>
            <person name="Yang J."/>
            <person name="Dubchak I."/>
            <person name="Furey T.S."/>
            <person name="DeJong P."/>
            <person name="Dickson M."/>
            <person name="Gordon D."/>
            <person name="Eichler E.E."/>
            <person name="Pennacchio L.A."/>
            <person name="Richardson P."/>
            <person name="Stubbs L."/>
            <person name="Rokhsar D.S."/>
            <person name="Myers R.M."/>
            <person name="Rubin E.M."/>
            <person name="Lucas S.M."/>
        </authorList>
    </citation>
    <scope>NUCLEOTIDE SEQUENCE [LARGE SCALE GENOMIC DNA]</scope>
</reference>
<reference key="2">
    <citation type="submission" date="2005-07" db="EMBL/GenBank/DDBJ databases">
        <authorList>
            <person name="Mural R.J."/>
            <person name="Istrail S."/>
            <person name="Sutton G.G."/>
            <person name="Florea L."/>
            <person name="Halpern A.L."/>
            <person name="Mobarry C.M."/>
            <person name="Lippert R."/>
            <person name="Walenz B."/>
            <person name="Shatkay H."/>
            <person name="Dew I."/>
            <person name="Miller J.R."/>
            <person name="Flanigan M.J."/>
            <person name="Edwards N.J."/>
            <person name="Bolanos R."/>
            <person name="Fasulo D."/>
            <person name="Halldorsson B.V."/>
            <person name="Hannenhalli S."/>
            <person name="Turner R."/>
            <person name="Yooseph S."/>
            <person name="Lu F."/>
            <person name="Nusskern D.R."/>
            <person name="Shue B.C."/>
            <person name="Zheng X.H."/>
            <person name="Zhong F."/>
            <person name="Delcher A.L."/>
            <person name="Huson D.H."/>
            <person name="Kravitz S.A."/>
            <person name="Mouchard L."/>
            <person name="Reinert K."/>
            <person name="Remington K.A."/>
            <person name="Clark A.G."/>
            <person name="Waterman M.S."/>
            <person name="Eichler E.E."/>
            <person name="Adams M.D."/>
            <person name="Hunkapiller M.W."/>
            <person name="Myers E.W."/>
            <person name="Venter J.C."/>
        </authorList>
    </citation>
    <scope>NUCLEOTIDE SEQUENCE [LARGE SCALE GENOMIC DNA]</scope>
</reference>
<reference key="3">
    <citation type="journal article" date="2004" name="Genome Res.">
        <title>The status, quality, and expansion of the NIH full-length cDNA project: the Mammalian Gene Collection (MGC).</title>
        <authorList>
            <consortium name="The MGC Project Team"/>
        </authorList>
    </citation>
    <scope>NUCLEOTIDE SEQUENCE [LARGE SCALE MRNA] (ISOFORM 1)</scope>
    <source>
        <tissue>Placenta</tissue>
        <tissue>Uterus</tissue>
    </source>
</reference>
<reference key="4">
    <citation type="submission" date="2005-05" db="EMBL/GenBank/DDBJ databases">
        <title>High-throughput cloning of full-length human cDNAs directly from cDNA libraries optimized for large and rare transcripts.</title>
        <authorList>
            <person name="Birkett C."/>
            <person name="Cho J."/>
            <person name="Gau Y."/>
            <person name="Hamer R."/>
            <person name="Kelly S."/>
            <person name="Kovacs K."/>
            <person name="Liu L."/>
            <person name="Liu X."/>
            <person name="Porter J."/>
            <person name="Sachs A."/>
            <person name="Shu Y."/>
            <person name="Sun Z."/>
            <person name="Wong J."/>
            <person name="Wu M."/>
            <person name="Zhang X."/>
            <person name="Jay G."/>
            <person name="He W."/>
        </authorList>
    </citation>
    <scope>NUCLEOTIDE SEQUENCE [LARGE SCALE MRNA] OF 1-215 (ISOFORM 2)</scope>
</reference>
<gene>
    <name type="primary">ZNF625</name>
</gene>
<feature type="chain" id="PRO_0000234602" description="Zinc finger protein 625">
    <location>
        <begin position="1"/>
        <end position="306"/>
    </location>
</feature>
<feature type="zinc finger region" description="C2H2-type 1; degenerate" evidence="2">
    <location>
        <begin position="31"/>
        <end position="53"/>
    </location>
</feature>
<feature type="zinc finger region" description="C2H2-type 2" evidence="2">
    <location>
        <begin position="69"/>
        <end position="91"/>
    </location>
</feature>
<feature type="zinc finger region" description="C2H2-type 3" evidence="2">
    <location>
        <begin position="97"/>
        <end position="119"/>
    </location>
</feature>
<feature type="zinc finger region" description="C2H2-type 4" evidence="2">
    <location>
        <begin position="125"/>
        <end position="147"/>
    </location>
</feature>
<feature type="zinc finger region" description="C2H2-type 5" evidence="2">
    <location>
        <begin position="153"/>
        <end position="175"/>
    </location>
</feature>
<feature type="zinc finger region" description="C2H2-type 6" evidence="2">
    <location>
        <begin position="181"/>
        <end position="203"/>
    </location>
</feature>
<feature type="zinc finger region" description="C2H2-type 7" evidence="2">
    <location>
        <begin position="209"/>
        <end position="231"/>
    </location>
</feature>
<feature type="zinc finger region" description="C2H2-type 8" evidence="2">
    <location>
        <begin position="237"/>
        <end position="259"/>
    </location>
</feature>
<feature type="zinc finger region" description="C2H2-type 9" evidence="2">
    <location>
        <begin position="265"/>
        <end position="287"/>
    </location>
</feature>
<feature type="region of interest" description="Disordered" evidence="3">
    <location>
        <begin position="287"/>
        <end position="306"/>
    </location>
</feature>
<feature type="modified residue" description="Phosphotyrosine" evidence="1">
    <location>
        <position position="209"/>
    </location>
</feature>
<feature type="splice variant" id="VSP_046327" description="In isoform 2." evidence="4">
    <original>M</original>
    <variation>MDSVVFEDVDVNFTQEEWALLDPSQKNLYRDVMQETFRNLASVGKKWKDQKIEDEYKNPRRNLRGLM</variation>
    <location>
        <position position="1"/>
    </location>
</feature>
<feature type="sequence variant" id="VAR_052882" description="In dbSNP:rs7258368.">
    <original>V</original>
    <variation>M</variation>
    <location>
        <position position="41"/>
    </location>
</feature>
<organism>
    <name type="scientific">Homo sapiens</name>
    <name type="common">Human</name>
    <dbReference type="NCBI Taxonomy" id="9606"/>
    <lineage>
        <taxon>Eukaryota</taxon>
        <taxon>Metazoa</taxon>
        <taxon>Chordata</taxon>
        <taxon>Craniata</taxon>
        <taxon>Vertebrata</taxon>
        <taxon>Euteleostomi</taxon>
        <taxon>Mammalia</taxon>
        <taxon>Eutheria</taxon>
        <taxon>Euarchontoglires</taxon>
        <taxon>Primates</taxon>
        <taxon>Haplorrhini</taxon>
        <taxon>Catarrhini</taxon>
        <taxon>Hominidae</taxon>
        <taxon>Homo</taxon>
    </lineage>
</organism>
<proteinExistence type="evidence at protein level"/>
<protein>
    <recommendedName>
        <fullName>Zinc finger protein 625</fullName>
    </recommendedName>
</protein>